<proteinExistence type="inferred from homology"/>
<keyword id="KW-0064">Aspartyl protease</keyword>
<keyword id="KW-0997">Cell inner membrane</keyword>
<keyword id="KW-1003">Cell membrane</keyword>
<keyword id="KW-0378">Hydrolase</keyword>
<keyword id="KW-0472">Membrane</keyword>
<keyword id="KW-0645">Protease</keyword>
<keyword id="KW-1185">Reference proteome</keyword>
<keyword id="KW-0812">Transmembrane</keyword>
<keyword id="KW-1133">Transmembrane helix</keyword>
<protein>
    <recommendedName>
        <fullName evidence="1">Lipoprotein signal peptidase</fullName>
        <ecNumber evidence="1">3.4.23.36</ecNumber>
    </recommendedName>
    <alternativeName>
        <fullName evidence="1">Prolipoprotein signal peptidase</fullName>
    </alternativeName>
    <alternativeName>
        <fullName evidence="1">Signal peptidase II</fullName>
        <shortName evidence="1">SPase II</shortName>
    </alternativeName>
</protein>
<reference key="1">
    <citation type="journal article" date="2005" name="Infect. Immun.">
        <title>Whole-genome analyses of speciation events in pathogenic Brucellae.</title>
        <authorList>
            <person name="Chain P.S."/>
            <person name="Comerci D.J."/>
            <person name="Tolmasky M.E."/>
            <person name="Larimer F.W."/>
            <person name="Malfatti S.A."/>
            <person name="Vergez L.M."/>
            <person name="Aguero F."/>
            <person name="Land M.L."/>
            <person name="Ugalde R.A."/>
            <person name="Garcia E."/>
        </authorList>
    </citation>
    <scope>NUCLEOTIDE SEQUENCE [LARGE SCALE GENOMIC DNA]</scope>
    <source>
        <strain>2308</strain>
    </source>
</reference>
<name>LSPA_BRUA2</name>
<feature type="chain" id="PRO_0000289358" description="Lipoprotein signal peptidase">
    <location>
        <begin position="1"/>
        <end position="160"/>
    </location>
</feature>
<feature type="transmembrane region" description="Helical" evidence="1">
    <location>
        <begin position="6"/>
        <end position="26"/>
    </location>
</feature>
<feature type="transmembrane region" description="Helical" evidence="1">
    <location>
        <begin position="58"/>
        <end position="78"/>
    </location>
</feature>
<feature type="transmembrane region" description="Helical" evidence="1">
    <location>
        <begin position="95"/>
        <end position="115"/>
    </location>
</feature>
<feature type="transmembrane region" description="Helical" evidence="1">
    <location>
        <begin position="127"/>
        <end position="147"/>
    </location>
</feature>
<feature type="active site" evidence="1">
    <location>
        <position position="117"/>
    </location>
</feature>
<feature type="active site" evidence="1">
    <location>
        <position position="135"/>
    </location>
</feature>
<evidence type="ECO:0000255" key="1">
    <source>
        <dbReference type="HAMAP-Rule" id="MF_00161"/>
    </source>
</evidence>
<gene>
    <name evidence="1" type="primary">lspA</name>
    <name type="ordered locus">BAB1_0148</name>
</gene>
<organism>
    <name type="scientific">Brucella abortus (strain 2308)</name>
    <dbReference type="NCBI Taxonomy" id="359391"/>
    <lineage>
        <taxon>Bacteria</taxon>
        <taxon>Pseudomonadati</taxon>
        <taxon>Pseudomonadota</taxon>
        <taxon>Alphaproteobacteria</taxon>
        <taxon>Hyphomicrobiales</taxon>
        <taxon>Brucellaceae</taxon>
        <taxon>Brucella/Ochrobactrum group</taxon>
        <taxon>Brucella</taxon>
    </lineage>
</organism>
<sequence>MKRHAVWSSLFVVILAVLIDQGIKYLVESRMFYGQQIDLLPFLALFRTHNEGIAFSMLAWLHDGGLIAITLAVIAFVLYLWWTNAPERVFARYGFALVIGGAIGNLIDRVMHGYVVDYVLFHLPTWSFAVFNLADAFITIGAGLIILEEFLGWRRERISH</sequence>
<dbReference type="EC" id="3.4.23.36" evidence="1"/>
<dbReference type="EMBL" id="AM040264">
    <property type="protein sequence ID" value="CAJ10104.1"/>
    <property type="molecule type" value="Genomic_DNA"/>
</dbReference>
<dbReference type="RefSeq" id="WP_002965397.1">
    <property type="nucleotide sequence ID" value="NZ_KN046823.1"/>
</dbReference>
<dbReference type="SMR" id="Q2YNY8"/>
<dbReference type="STRING" id="359391.BAB1_0148"/>
<dbReference type="GeneID" id="97534439"/>
<dbReference type="KEGG" id="bmf:BAB1_0148"/>
<dbReference type="PATRIC" id="fig|359391.11.peg.1571"/>
<dbReference type="HOGENOM" id="CLU_083252_4_3_5"/>
<dbReference type="PhylomeDB" id="Q2YNY8"/>
<dbReference type="UniPathway" id="UPA00665"/>
<dbReference type="Proteomes" id="UP000002719">
    <property type="component" value="Chromosome I"/>
</dbReference>
<dbReference type="GO" id="GO:0005886">
    <property type="term" value="C:plasma membrane"/>
    <property type="evidence" value="ECO:0007669"/>
    <property type="project" value="UniProtKB-SubCell"/>
</dbReference>
<dbReference type="GO" id="GO:0004190">
    <property type="term" value="F:aspartic-type endopeptidase activity"/>
    <property type="evidence" value="ECO:0007669"/>
    <property type="project" value="UniProtKB-UniRule"/>
</dbReference>
<dbReference type="GO" id="GO:0006508">
    <property type="term" value="P:proteolysis"/>
    <property type="evidence" value="ECO:0007669"/>
    <property type="project" value="UniProtKB-KW"/>
</dbReference>
<dbReference type="HAMAP" id="MF_00161">
    <property type="entry name" value="LspA"/>
    <property type="match status" value="1"/>
</dbReference>
<dbReference type="InterPro" id="IPR001872">
    <property type="entry name" value="Peptidase_A8"/>
</dbReference>
<dbReference type="NCBIfam" id="TIGR00077">
    <property type="entry name" value="lspA"/>
    <property type="match status" value="1"/>
</dbReference>
<dbReference type="PANTHER" id="PTHR33695">
    <property type="entry name" value="LIPOPROTEIN SIGNAL PEPTIDASE"/>
    <property type="match status" value="1"/>
</dbReference>
<dbReference type="PANTHER" id="PTHR33695:SF1">
    <property type="entry name" value="LIPOPROTEIN SIGNAL PEPTIDASE"/>
    <property type="match status" value="1"/>
</dbReference>
<dbReference type="Pfam" id="PF01252">
    <property type="entry name" value="Peptidase_A8"/>
    <property type="match status" value="1"/>
</dbReference>
<dbReference type="PRINTS" id="PR00781">
    <property type="entry name" value="LIPOSIGPTASE"/>
</dbReference>
<dbReference type="PROSITE" id="PS00855">
    <property type="entry name" value="SPASE_II"/>
    <property type="match status" value="1"/>
</dbReference>
<comment type="function">
    <text evidence="1">This protein specifically catalyzes the removal of signal peptides from prolipoproteins.</text>
</comment>
<comment type="catalytic activity">
    <reaction evidence="1">
        <text>Release of signal peptides from bacterial membrane prolipoproteins. Hydrolyzes -Xaa-Yaa-Zaa-|-(S,diacylglyceryl)Cys-, in which Xaa is hydrophobic (preferably Leu), and Yaa (Ala or Ser) and Zaa (Gly or Ala) have small, neutral side chains.</text>
        <dbReference type="EC" id="3.4.23.36"/>
    </reaction>
</comment>
<comment type="pathway">
    <text evidence="1">Protein modification; lipoprotein biosynthesis (signal peptide cleavage).</text>
</comment>
<comment type="subcellular location">
    <subcellularLocation>
        <location evidence="1">Cell inner membrane</location>
        <topology evidence="1">Multi-pass membrane protein</topology>
    </subcellularLocation>
</comment>
<comment type="similarity">
    <text evidence="1">Belongs to the peptidase A8 family.</text>
</comment>
<accession>Q2YNY8</accession>